<comment type="function">
    <text>Dosage dependent suppressor of PKC1 deletion and MPK1 deletion. Involved in cell lysis.</text>
</comment>
<comment type="interaction">
    <interactant intactId="EBI-3480">
        <id>P33306</id>
    </interactant>
    <interactant intactId="EBI-7193">
        <id>P16892</id>
        <label>FUS3</label>
    </interactant>
    <organismsDiffer>false</organismsDiffer>
    <experiments>2</experiments>
</comment>
<comment type="interaction">
    <interactant intactId="EBI-3480">
        <id>P33306</id>
    </interactant>
    <interactant intactId="EBI-9619">
        <id>P38853</id>
        <label>KEL1</label>
    </interactant>
    <organismsDiffer>false</organismsDiffer>
    <experiments>2</experiments>
</comment>
<comment type="interaction">
    <interactant intactId="EBI-3480">
        <id>P33306</id>
    </interactant>
    <interactant intactId="EBI-9723">
        <id>P13186</id>
        <label>KIN2</label>
    </interactant>
    <organismsDiffer>false</organismsDiffer>
    <experiments>4</experiments>
</comment>
<comment type="interaction">
    <interactant intactId="EBI-3480">
        <id>P33306</id>
    </interactant>
    <interactant intactId="EBI-9945">
        <id>P14681</id>
        <label>KSS1</label>
    </interactant>
    <organismsDiffer>false</organismsDiffer>
    <experiments>5</experiments>
</comment>
<keyword id="KW-0597">Phosphoprotein</keyword>
<keyword id="KW-1185">Reference proteome</keyword>
<organism>
    <name type="scientific">Saccharomyces cerevisiae (strain ATCC 204508 / S288c)</name>
    <name type="common">Baker's yeast</name>
    <dbReference type="NCBI Taxonomy" id="559292"/>
    <lineage>
        <taxon>Eukaryota</taxon>
        <taxon>Fungi</taxon>
        <taxon>Dikarya</taxon>
        <taxon>Ascomycota</taxon>
        <taxon>Saccharomycotina</taxon>
        <taxon>Saccharomycetes</taxon>
        <taxon>Saccharomycetales</taxon>
        <taxon>Saccharomycetaceae</taxon>
        <taxon>Saccharomyces</taxon>
    </lineage>
</organism>
<proteinExistence type="evidence at protein level"/>
<reference key="1">
    <citation type="journal article" date="1993" name="Mol. Cell. Biol.">
        <title>A pair of functionally redundant yeast genes (PPZ1 and PPZ2) encoding type 1-related protein phosphatases function within the PKC1-mediated pathway.</title>
        <authorList>
            <person name="Lee K.S."/>
            <person name="Hines L.K."/>
            <person name="Levin D.E."/>
        </authorList>
    </citation>
    <scope>NUCLEOTIDE SEQUENCE [GENOMIC DNA]</scope>
    <source>
        <strain>ATCC 204508 / S288c</strain>
    </source>
</reference>
<reference key="2">
    <citation type="journal article" date="1997" name="Nature">
        <title>The nucleotide sequence of Saccharomyces cerevisiae chromosome V.</title>
        <authorList>
            <person name="Dietrich F.S."/>
            <person name="Mulligan J.T."/>
            <person name="Hennessy K.M."/>
            <person name="Yelton M.A."/>
            <person name="Allen E."/>
            <person name="Araujo R."/>
            <person name="Aviles E."/>
            <person name="Berno A."/>
            <person name="Brennan T."/>
            <person name="Carpenter J."/>
            <person name="Chen E."/>
            <person name="Cherry J.M."/>
            <person name="Chung E."/>
            <person name="Duncan M."/>
            <person name="Guzman E."/>
            <person name="Hartzell G."/>
            <person name="Hunicke-Smith S."/>
            <person name="Hyman R.W."/>
            <person name="Kayser A."/>
            <person name="Komp C."/>
            <person name="Lashkari D."/>
            <person name="Lew H."/>
            <person name="Lin D."/>
            <person name="Mosedale D."/>
            <person name="Nakahara K."/>
            <person name="Namath A."/>
            <person name="Norgren R."/>
            <person name="Oefner P."/>
            <person name="Oh C."/>
            <person name="Petel F.X."/>
            <person name="Roberts D."/>
            <person name="Sehl P."/>
            <person name="Schramm S."/>
            <person name="Shogren T."/>
            <person name="Smith V."/>
            <person name="Taylor P."/>
            <person name="Wei Y."/>
            <person name="Botstein D."/>
            <person name="Davis R.W."/>
        </authorList>
    </citation>
    <scope>NUCLEOTIDE SEQUENCE [LARGE SCALE GENOMIC DNA]</scope>
    <source>
        <strain>ATCC 204508 / S288c</strain>
    </source>
</reference>
<reference key="3">
    <citation type="journal article" date="2014" name="G3 (Bethesda)">
        <title>The reference genome sequence of Saccharomyces cerevisiae: Then and now.</title>
        <authorList>
            <person name="Engel S.R."/>
            <person name="Dietrich F.S."/>
            <person name="Fisk D.G."/>
            <person name="Binkley G."/>
            <person name="Balakrishnan R."/>
            <person name="Costanzo M.C."/>
            <person name="Dwight S.S."/>
            <person name="Hitz B.C."/>
            <person name="Karra K."/>
            <person name="Nash R.S."/>
            <person name="Weng S."/>
            <person name="Wong E.D."/>
            <person name="Lloyd P."/>
            <person name="Skrzypek M.S."/>
            <person name="Miyasato S.R."/>
            <person name="Simison M."/>
            <person name="Cherry J.M."/>
        </authorList>
    </citation>
    <scope>GENOME REANNOTATION</scope>
    <source>
        <strain>ATCC 204508 / S288c</strain>
    </source>
</reference>
<reference key="4">
    <citation type="journal article" date="2007" name="Proc. Natl. Acad. Sci. U.S.A.">
        <title>Analysis of phosphorylation sites on proteins from Saccharomyces cerevisiae by electron transfer dissociation (ETD) mass spectrometry.</title>
        <authorList>
            <person name="Chi A."/>
            <person name="Huttenhower C."/>
            <person name="Geer L.Y."/>
            <person name="Coon J.J."/>
            <person name="Syka J.E.P."/>
            <person name="Bai D.L."/>
            <person name="Shabanowitz J."/>
            <person name="Burke D.J."/>
            <person name="Troyanskaya O.G."/>
            <person name="Hunt D.F."/>
        </authorList>
    </citation>
    <scope>PHOSPHORYLATION [LARGE SCALE ANALYSIS] AT SER-334</scope>
    <scope>IDENTIFICATION BY MASS SPECTROMETRY [LARGE SCALE ANALYSIS]</scope>
</reference>
<reference key="5">
    <citation type="journal article" date="2008" name="Mol. Cell. Proteomics">
        <title>A multidimensional chromatography technology for in-depth phosphoproteome analysis.</title>
        <authorList>
            <person name="Albuquerque C.P."/>
            <person name="Smolka M.B."/>
            <person name="Payne S.H."/>
            <person name="Bafna V."/>
            <person name="Eng J."/>
            <person name="Zhou H."/>
        </authorList>
    </citation>
    <scope>PHOSPHORYLATION [LARGE SCALE ANALYSIS] AT SER-757</scope>
    <scope>IDENTIFICATION BY MASS SPECTROMETRY [LARGE SCALE ANALYSIS]</scope>
</reference>
<reference key="6">
    <citation type="journal article" date="2009" name="Science">
        <title>Global analysis of Cdk1 substrate phosphorylation sites provides insights into evolution.</title>
        <authorList>
            <person name="Holt L.J."/>
            <person name="Tuch B.B."/>
            <person name="Villen J."/>
            <person name="Johnson A.D."/>
            <person name="Gygi S.P."/>
            <person name="Morgan D.O."/>
        </authorList>
    </citation>
    <scope>PHOSPHORYLATION [LARGE SCALE ANALYSIS] AT SER-757 AND SER-761</scope>
    <scope>IDENTIFICATION BY MASS SPECTROMETRY [LARGE SCALE ANALYSIS]</scope>
</reference>
<sequence>MPKNSHHHRSSSVNSTKSRSTESTNKWKIPHYYRRSASGSTQASPDRNSSTGSCSTPVLPTMNVMSSPKKVLLEDPRDNHTKAKKSSRKKSGEMVFVNYTVQDTANENDTDLQTQPVSVPAPKAKLKKKSSKRRMLKIFGSSKNEHIEDIVEEQPMVLQMDSESKPLSGTPISESGIDASSLTTKRSYNSFLKHNRLNGKTPFSGNLSFPSLNMMGNTTDLPIDNNDFCSEKEVVPKSTHDPSLAKPPSRFTESETNSTPNLSSIPLMNTKNTRLKYNKVAPQSSDRQKSQESGLYHSTESFNFKDQNYSNNKSSLSLNSDLSTPHFAKHSPDSPRTSRSFNCGDSQSKVKLPEENDASIAFSKMFTRKRANTGGSTCSLASPTIAQTIQQSNIKVNKLPTQRTTSVGSLSSMSNRYSPIRVASPGRARSATRGSSLYRLSRDLNSLPSVTDLPEMDSTTPVNEIFLDGQPQHKSGSVKGGHRKKQESISDAQRIQHSNSYITTPSSSLVTPPYYMTGYTLPSSASASSTPNVLETHNMNFVPSTSTVTSYRPSSNFSSFDKEYSNENDASGEFSAFNTPMENIPALKGIPRSTLEENEEEDVLVQDIPNTAHFQRRDIMGMDTHRKDDSLDFNSLMPHGSTTSSSIVDSVMTNSISTTTSNATGNYFQDQDKYTLVNTGLGLSDANLDHFIRSQWKHASRSESNNNTGNRVSYSGSTPNNVDTTKTNLQVYTEFDFENPESFFHEQSKLLGEMGHSNNNSNSAINMNEPKSADTYIGNISPDTSATVSLGDLMGSNVSNNSERNFYDGHTFVPQYQANSSVENSNNQNAAPIANNDIDNNLQSFYFDNSN</sequence>
<accession>P33306</accession>
<accession>D3DM75</accession>
<protein>
    <recommendedName>
        <fullName>Protein BCK2</fullName>
    </recommendedName>
    <alternativeName>
        <fullName>Bypass of kinase C protein</fullName>
    </alternativeName>
</protein>
<feature type="chain" id="PRO_0000064883" description="Protein BCK2">
    <location>
        <begin position="1"/>
        <end position="851"/>
    </location>
</feature>
<feature type="region of interest" description="Disordered" evidence="1">
    <location>
        <begin position="1"/>
        <end position="91"/>
    </location>
</feature>
<feature type="region of interest" description="Disordered" evidence="1">
    <location>
        <begin position="233"/>
        <end position="271"/>
    </location>
</feature>
<feature type="region of interest" description="Disordered" evidence="1">
    <location>
        <begin position="315"/>
        <end position="355"/>
    </location>
</feature>
<feature type="region of interest" description="Disordered" evidence="1">
    <location>
        <begin position="466"/>
        <end position="504"/>
    </location>
</feature>
<feature type="region of interest" description="Disordered" evidence="1">
    <location>
        <begin position="698"/>
        <end position="722"/>
    </location>
</feature>
<feature type="compositionally biased region" description="Basic residues" evidence="1">
    <location>
        <begin position="1"/>
        <end position="10"/>
    </location>
</feature>
<feature type="compositionally biased region" description="Low complexity" evidence="1">
    <location>
        <begin position="11"/>
        <end position="23"/>
    </location>
</feature>
<feature type="compositionally biased region" description="Polar residues" evidence="1">
    <location>
        <begin position="37"/>
        <end position="66"/>
    </location>
</feature>
<feature type="compositionally biased region" description="Basic and acidic residues" evidence="1">
    <location>
        <begin position="71"/>
        <end position="81"/>
    </location>
</feature>
<feature type="compositionally biased region" description="Polar residues" evidence="1">
    <location>
        <begin position="254"/>
        <end position="271"/>
    </location>
</feature>
<feature type="compositionally biased region" description="Polar residues" evidence="1">
    <location>
        <begin position="334"/>
        <end position="349"/>
    </location>
</feature>
<feature type="compositionally biased region" description="Polar residues" evidence="1">
    <location>
        <begin position="489"/>
        <end position="504"/>
    </location>
</feature>
<feature type="compositionally biased region" description="Polar residues" evidence="1">
    <location>
        <begin position="702"/>
        <end position="722"/>
    </location>
</feature>
<feature type="modified residue" description="Phosphoserine" evidence="3">
    <location>
        <position position="334"/>
    </location>
</feature>
<feature type="modified residue" description="Phosphoserine" evidence="4 5">
    <location>
        <position position="757"/>
    </location>
</feature>
<feature type="modified residue" description="Phosphoserine" evidence="5">
    <location>
        <position position="761"/>
    </location>
</feature>
<feature type="sequence conflict" description="In Ref. 1; AAA34452." evidence="2" ref="1">
    <original>NS</original>
    <variation>HC</variation>
    <location>
        <begin position="4"/>
        <end position="5"/>
    </location>
</feature>
<feature type="sequence conflict" description="In Ref. 1; AAA34452." evidence="2" ref="1">
    <original>T</original>
    <variation>A</variation>
    <location>
        <position position="100"/>
    </location>
</feature>
<feature type="sequence conflict" description="In Ref. 1; AAA34452." evidence="2" ref="1">
    <original>L</original>
    <variation>F</variation>
    <location>
        <position position="167"/>
    </location>
</feature>
<feature type="sequence conflict" description="In Ref. 1; AAA34452." evidence="2" ref="1">
    <original>F</original>
    <variation>C</variation>
    <location>
        <position position="812"/>
    </location>
</feature>
<feature type="sequence conflict" description="In Ref. 1; AAA34452." evidence="2" ref="1">
    <original>N</original>
    <variation>K</variation>
    <location>
        <position position="827"/>
    </location>
</feature>
<name>BCK2_YEAST</name>
<gene>
    <name type="primary">BCK2</name>
    <name type="synonym">CTR7</name>
    <name type="ordered locus">YER167W</name>
</gene>
<evidence type="ECO:0000256" key="1">
    <source>
        <dbReference type="SAM" id="MobiDB-lite"/>
    </source>
</evidence>
<evidence type="ECO:0000305" key="2"/>
<evidence type="ECO:0007744" key="3">
    <source>
    </source>
</evidence>
<evidence type="ECO:0007744" key="4">
    <source>
    </source>
</evidence>
<evidence type="ECO:0007744" key="5">
    <source>
    </source>
</evidence>
<dbReference type="EMBL" id="L10242">
    <property type="protein sequence ID" value="AAA34452.1"/>
    <property type="molecule type" value="Genomic_DNA"/>
</dbReference>
<dbReference type="EMBL" id="U18922">
    <property type="protein sequence ID" value="AAB64694.1"/>
    <property type="molecule type" value="Genomic_DNA"/>
</dbReference>
<dbReference type="EMBL" id="BK006939">
    <property type="protein sequence ID" value="DAA07829.1"/>
    <property type="molecule type" value="Genomic_DNA"/>
</dbReference>
<dbReference type="PIR" id="S50670">
    <property type="entry name" value="S50670"/>
</dbReference>
<dbReference type="RefSeq" id="NP_011094.3">
    <property type="nucleotide sequence ID" value="NM_001179057.3"/>
</dbReference>
<dbReference type="BioGRID" id="36920">
    <property type="interactions" value="256"/>
</dbReference>
<dbReference type="DIP" id="DIP-6406N"/>
<dbReference type="FunCoup" id="P33306">
    <property type="interactions" value="212"/>
</dbReference>
<dbReference type="IntAct" id="P33306">
    <property type="interactions" value="14"/>
</dbReference>
<dbReference type="MINT" id="P33306"/>
<dbReference type="STRING" id="4932.YER167W"/>
<dbReference type="GlyGen" id="P33306">
    <property type="glycosylation" value="1 site, 1 O-linked glycan (1 site)"/>
</dbReference>
<dbReference type="iPTMnet" id="P33306"/>
<dbReference type="PaxDb" id="4932-YER167W"/>
<dbReference type="PeptideAtlas" id="P33306"/>
<dbReference type="EnsemblFungi" id="YER167W_mRNA">
    <property type="protein sequence ID" value="YER167W"/>
    <property type="gene ID" value="YER167W"/>
</dbReference>
<dbReference type="GeneID" id="856914"/>
<dbReference type="KEGG" id="sce:YER167W"/>
<dbReference type="AGR" id="SGD:S000000969"/>
<dbReference type="SGD" id="S000000969">
    <property type="gene designation" value="BCK2"/>
</dbReference>
<dbReference type="VEuPathDB" id="FungiDB:YER167W"/>
<dbReference type="eggNOG" id="ENOG502RH5A">
    <property type="taxonomic scope" value="Eukaryota"/>
</dbReference>
<dbReference type="HOGENOM" id="CLU_016939_0_0_1"/>
<dbReference type="InParanoid" id="P33306"/>
<dbReference type="OMA" id="GHRKKQE"/>
<dbReference type="OrthoDB" id="4069723at2759"/>
<dbReference type="BioCyc" id="YEAST:G3O-30328-MONOMER"/>
<dbReference type="BioGRID-ORCS" id="856914">
    <property type="hits" value="0 hits in 10 CRISPR screens"/>
</dbReference>
<dbReference type="PRO" id="PR:P33306"/>
<dbReference type="Proteomes" id="UP000002311">
    <property type="component" value="Chromosome V"/>
</dbReference>
<dbReference type="RNAct" id="P33306">
    <property type="molecule type" value="protein"/>
</dbReference>
<dbReference type="GO" id="GO:0005737">
    <property type="term" value="C:cytoplasm"/>
    <property type="evidence" value="ECO:0007005"/>
    <property type="project" value="SGD"/>
</dbReference>
<dbReference type="GO" id="GO:0005634">
    <property type="term" value="C:nucleus"/>
    <property type="evidence" value="ECO:0007005"/>
    <property type="project" value="SGD"/>
</dbReference>
<dbReference type="GO" id="GO:0000082">
    <property type="term" value="P:G1/S transition of mitotic cell cycle"/>
    <property type="evidence" value="ECO:0000316"/>
    <property type="project" value="SGD"/>
</dbReference>
<dbReference type="GO" id="GO:0010628">
    <property type="term" value="P:positive regulation of gene expression"/>
    <property type="evidence" value="ECO:0000315"/>
    <property type="project" value="SGD"/>
</dbReference>
<dbReference type="GO" id="GO:0051726">
    <property type="term" value="P:regulation of cell cycle"/>
    <property type="evidence" value="ECO:0000315"/>
    <property type="project" value="SGD"/>
</dbReference>